<feature type="chain" id="PRO_0000456784" description="Myo-inositol transporter 3C">
    <location>
        <begin position="1"/>
        <end position="590"/>
    </location>
</feature>
<feature type="topological domain" description="Cytoplasmic" evidence="8">
    <location>
        <begin position="1"/>
        <end position="63"/>
    </location>
</feature>
<feature type="transmembrane region" description="Helical; Name=1" evidence="1">
    <location>
        <begin position="64"/>
        <end position="86"/>
    </location>
</feature>
<feature type="topological domain" description="Extracellular" evidence="8">
    <location>
        <begin position="87"/>
        <end position="105"/>
    </location>
</feature>
<feature type="transmembrane region" description="Helical; Name=2" evidence="1">
    <location>
        <begin position="106"/>
        <end position="126"/>
    </location>
</feature>
<feature type="topological domain" description="Cytoplasmic" evidence="8">
    <location>
        <begin position="127"/>
        <end position="132"/>
    </location>
</feature>
<feature type="transmembrane region" description="Helical; Name=3" evidence="1">
    <location>
        <begin position="133"/>
        <end position="153"/>
    </location>
</feature>
<feature type="topological domain" description="Extracellular" evidence="8">
    <location>
        <begin position="154"/>
        <end position="162"/>
    </location>
</feature>
<feature type="transmembrane region" description="Helical; Name=4" evidence="1">
    <location>
        <begin position="163"/>
        <end position="183"/>
    </location>
</feature>
<feature type="topological domain" description="Cytoplasmic" evidence="8">
    <location>
        <begin position="184"/>
        <end position="192"/>
    </location>
</feature>
<feature type="transmembrane region" description="Helical; Name=5" evidence="1">
    <location>
        <begin position="193"/>
        <end position="213"/>
    </location>
</feature>
<feature type="topological domain" description="Extracellular" evidence="8">
    <location>
        <begin position="214"/>
        <end position="222"/>
    </location>
</feature>
<feature type="transmembrane region" description="Helical; Name=6" evidence="1">
    <location>
        <begin position="223"/>
        <end position="243"/>
    </location>
</feature>
<feature type="topological domain" description="Cytoplasmic" evidence="8">
    <location>
        <begin position="244"/>
        <end position="325"/>
    </location>
</feature>
<feature type="transmembrane region" description="Helical; Name=7" evidence="1">
    <location>
        <begin position="326"/>
        <end position="346"/>
    </location>
</feature>
<feature type="topological domain" description="Extracellular" evidence="8">
    <location>
        <begin position="347"/>
        <end position="349"/>
    </location>
</feature>
<feature type="transmembrane region" description="Helical; Name=8" evidence="1">
    <location>
        <begin position="350"/>
        <end position="370"/>
    </location>
</feature>
<feature type="topological domain" description="Cytoplasmic" evidence="8">
    <location>
        <begin position="371"/>
        <end position="376"/>
    </location>
</feature>
<feature type="transmembrane region" description="Helical; Name=9" evidence="1">
    <location>
        <begin position="377"/>
        <end position="397"/>
    </location>
</feature>
<feature type="topological domain" description="Extracellular" evidence="8">
    <location>
        <begin position="398"/>
        <end position="417"/>
    </location>
</feature>
<feature type="transmembrane region" description="Helical; Name=10" evidence="1">
    <location>
        <begin position="418"/>
        <end position="438"/>
    </location>
</feature>
<feature type="topological domain" description="Cytoplasmic" evidence="8">
    <location>
        <begin position="439"/>
        <end position="454"/>
    </location>
</feature>
<feature type="transmembrane region" description="Helical; Name=11" evidence="1">
    <location>
        <begin position="455"/>
        <end position="475"/>
    </location>
</feature>
<feature type="topological domain" description="Extracellular" evidence="8">
    <location>
        <begin position="476"/>
        <end position="485"/>
    </location>
</feature>
<feature type="transmembrane region" description="Helical; Name=12" evidence="1">
    <location>
        <begin position="486"/>
        <end position="506"/>
    </location>
</feature>
<feature type="topological domain" description="Cytoplasmic" evidence="8">
    <location>
        <begin position="507"/>
        <end position="590"/>
    </location>
</feature>
<dbReference type="EMBL" id="CP003833">
    <property type="protein sequence ID" value="AFR98808.1"/>
    <property type="molecule type" value="Genomic_DNA"/>
</dbReference>
<dbReference type="RefSeq" id="XP_012053726.1">
    <property type="nucleotide sequence ID" value="XM_012198336.1"/>
</dbReference>
<dbReference type="SMR" id="J9VX18"/>
<dbReference type="GeneID" id="23888700"/>
<dbReference type="KEGG" id="cng:CNAG_05381"/>
<dbReference type="VEuPathDB" id="FungiDB:CNAG_05381"/>
<dbReference type="HOGENOM" id="CLU_001265_30_5_1"/>
<dbReference type="OrthoDB" id="6461at5206"/>
<dbReference type="Proteomes" id="UP000010091">
    <property type="component" value="Chromosome 14"/>
</dbReference>
<dbReference type="GO" id="GO:0005886">
    <property type="term" value="C:plasma membrane"/>
    <property type="evidence" value="ECO:0007669"/>
    <property type="project" value="UniProtKB-SubCell"/>
</dbReference>
<dbReference type="GO" id="GO:0005366">
    <property type="term" value="F:myo-inositol:proton symporter activity"/>
    <property type="evidence" value="ECO:0000316"/>
    <property type="project" value="UniProtKB"/>
</dbReference>
<dbReference type="GO" id="GO:1904679">
    <property type="term" value="P:myo-inositol import across plasma membrane"/>
    <property type="evidence" value="ECO:0000316"/>
    <property type="project" value="UniProtKB"/>
</dbReference>
<dbReference type="GO" id="GO:0035756">
    <property type="term" value="P:symbiont-mediated migration across host transepithelium"/>
    <property type="evidence" value="ECO:0000316"/>
    <property type="project" value="UniProtKB"/>
</dbReference>
<dbReference type="FunFam" id="1.20.1250.20:FF:000073">
    <property type="entry name" value="MFS myo-inositol transporter, putative"/>
    <property type="match status" value="1"/>
</dbReference>
<dbReference type="Gene3D" id="1.20.1250.20">
    <property type="entry name" value="MFS general substrate transporter like domains"/>
    <property type="match status" value="1"/>
</dbReference>
<dbReference type="InterPro" id="IPR020846">
    <property type="entry name" value="MFS_dom"/>
</dbReference>
<dbReference type="InterPro" id="IPR005828">
    <property type="entry name" value="MFS_sugar_transport-like"/>
</dbReference>
<dbReference type="InterPro" id="IPR036259">
    <property type="entry name" value="MFS_trans_sf"/>
</dbReference>
<dbReference type="InterPro" id="IPR050814">
    <property type="entry name" value="Myo-inositol_Transporter"/>
</dbReference>
<dbReference type="InterPro" id="IPR003663">
    <property type="entry name" value="Sugar/inositol_transpt"/>
</dbReference>
<dbReference type="InterPro" id="IPR005829">
    <property type="entry name" value="Sugar_transporter_CS"/>
</dbReference>
<dbReference type="NCBIfam" id="TIGR00879">
    <property type="entry name" value="SP"/>
    <property type="match status" value="1"/>
</dbReference>
<dbReference type="PANTHER" id="PTHR48020">
    <property type="entry name" value="PROTON MYO-INOSITOL COTRANSPORTER"/>
    <property type="match status" value="1"/>
</dbReference>
<dbReference type="PANTHER" id="PTHR48020:SF12">
    <property type="entry name" value="PROTON MYO-INOSITOL COTRANSPORTER"/>
    <property type="match status" value="1"/>
</dbReference>
<dbReference type="Pfam" id="PF00083">
    <property type="entry name" value="Sugar_tr"/>
    <property type="match status" value="1"/>
</dbReference>
<dbReference type="PRINTS" id="PR00171">
    <property type="entry name" value="SUGRTRNSPORT"/>
</dbReference>
<dbReference type="SUPFAM" id="SSF103473">
    <property type="entry name" value="MFS general substrate transporter"/>
    <property type="match status" value="1"/>
</dbReference>
<dbReference type="PROSITE" id="PS50850">
    <property type="entry name" value="MFS"/>
    <property type="match status" value="1"/>
</dbReference>
<dbReference type="PROSITE" id="PS00216">
    <property type="entry name" value="SUGAR_TRANSPORT_1"/>
    <property type="match status" value="1"/>
</dbReference>
<dbReference type="PROSITE" id="PS00217">
    <property type="entry name" value="SUGAR_TRANSPORT_2"/>
    <property type="match status" value="1"/>
</dbReference>
<protein>
    <recommendedName>
        <fullName evidence="7">Myo-inositol transporter 3C</fullName>
    </recommendedName>
</protein>
<sequence>MSRTPSSLDKDKGSSEFVENMNEIEIIEHTRVPSDKPSGFGGHLIDENLVKVEGEDKVTPYLCFLISASAIAGFLFGYDTGVVGVALPLVGTDLGGSVLSSSQQEIITAGTTIGAIFGSAILGGWGDRLGRKVAILIADVFFTVGAVLIAASYSVPQMIVGRIVLGVGVGGAAAIAPLFITETAPTAVRGRCIGVNAFFIPFGQVISEAIGAGVQDMKNGWRLLFALGAVPSLFQLILFHYLPESPRILILRGQTDRARHVFSRIYPNATPEMIDYKFRVAQEYVTATTVLQSGTTYWQRTKTLFTKGSYRRSIVTVSLIQMAGQLSGFNTLLYYAGTLFSLLGLTNPALGGLIPAGTNAFFVLVGMTLVDKVGRRGLLMFGVPIMLAGLVWNIVAFHYLCIPTGGLLDTSYKYDTKLVGIVIGGIVFFTTGFGLTYSHLAWYQSEFLALEVRSVGSGIATTANWVANLVVSVSYLTELETLTPSGTYGLYLGFSVVFFIFAVFCYPETKQLSIDETSLLFEEDWGVKRSREMRRERRETQRRLADSEMTEVATAHVQAQKQKDSAVTRSELDNFMEELKNGAKRFPISR</sequence>
<organism evidence="12">
    <name type="scientific">Cryptococcus neoformans var. grubii serotype A (strain H99 / ATCC 208821 / CBS 10515 / FGSC 9487)</name>
    <name type="common">Filobasidiella neoformans var. grubii</name>
    <dbReference type="NCBI Taxonomy" id="235443"/>
    <lineage>
        <taxon>Eukaryota</taxon>
        <taxon>Fungi</taxon>
        <taxon>Dikarya</taxon>
        <taxon>Basidiomycota</taxon>
        <taxon>Agaricomycotina</taxon>
        <taxon>Tremellomycetes</taxon>
        <taxon>Tremellales</taxon>
        <taxon>Cryptococcaceae</taxon>
        <taxon>Cryptococcus</taxon>
        <taxon>Cryptococcus neoformans species complex</taxon>
    </lineage>
</organism>
<accession>J9VX18</accession>
<keyword id="KW-1003">Cell membrane</keyword>
<keyword id="KW-0472">Membrane</keyword>
<keyword id="KW-0812">Transmembrane</keyword>
<keyword id="KW-1133">Transmembrane helix</keyword>
<keyword id="KW-0813">Transport</keyword>
<reference evidence="12" key="1">
    <citation type="journal article" date="2014" name="PLoS Genet.">
        <title>Analysis of the genome and transcriptome of Cryptococcus neoformans var. grubii reveals complex RNA expression and microevolution leading to virulence attenuation.</title>
        <authorList>
            <person name="Janbon G."/>
            <person name="Ormerod K.L."/>
            <person name="Paulet D."/>
            <person name="Byrnes E.J. III"/>
            <person name="Yadav V."/>
            <person name="Chatterjee G."/>
            <person name="Mullapudi N."/>
            <person name="Hon C.-C."/>
            <person name="Billmyre R.B."/>
            <person name="Brunel F."/>
            <person name="Bahn Y.-S."/>
            <person name="Chen W."/>
            <person name="Chen Y."/>
            <person name="Chow E.W.L."/>
            <person name="Coppee J.-Y."/>
            <person name="Floyd-Averette A."/>
            <person name="Gaillardin C."/>
            <person name="Gerik K.J."/>
            <person name="Goldberg J."/>
            <person name="Gonzalez-Hilarion S."/>
            <person name="Gujja S."/>
            <person name="Hamlin J.L."/>
            <person name="Hsueh Y.-P."/>
            <person name="Ianiri G."/>
            <person name="Jones S."/>
            <person name="Kodira C.D."/>
            <person name="Kozubowski L."/>
            <person name="Lam W."/>
            <person name="Marra M."/>
            <person name="Mesner L.D."/>
            <person name="Mieczkowski P.A."/>
            <person name="Moyrand F."/>
            <person name="Nielsen K."/>
            <person name="Proux C."/>
            <person name="Rossignol T."/>
            <person name="Schein J.E."/>
            <person name="Sun S."/>
            <person name="Wollschlaeger C."/>
            <person name="Wood I.A."/>
            <person name="Zeng Q."/>
            <person name="Neuveglise C."/>
            <person name="Newlon C.S."/>
            <person name="Perfect J.R."/>
            <person name="Lodge J.K."/>
            <person name="Idnurm A."/>
            <person name="Stajich J.E."/>
            <person name="Kronstad J.W."/>
            <person name="Sanyal K."/>
            <person name="Heitman J."/>
            <person name="Fraser J.A."/>
            <person name="Cuomo C.A."/>
            <person name="Dietrich F.S."/>
        </authorList>
    </citation>
    <scope>NUCLEOTIDE SEQUENCE [LARGE SCALE GENOMIC DNA]</scope>
    <source>
        <strain>H99 / ATCC 208821 / CBS 10515 / FGSC 9487</strain>
    </source>
</reference>
<reference evidence="8" key="2">
    <citation type="journal article" date="2010" name="MBio">
        <title>Role of an expanded inositol transporter repertoire in Cryptococcus neoformans sexual reproduction and virulence.</title>
        <authorList>
            <person name="Xue C."/>
            <person name="Liu T."/>
            <person name="Chen L."/>
            <person name="Li W."/>
            <person name="Liu I."/>
            <person name="Kronstad J.W."/>
            <person name="Seyfang A."/>
            <person name="Heitman J."/>
        </authorList>
    </citation>
    <scope>FUNCTION</scope>
    <scope>CATALYTIC ACTIVITY</scope>
    <scope>INDUCTION</scope>
</reference>
<reference evidence="8" key="3">
    <citation type="journal article" date="2011" name="Eukaryot. Cell">
        <title>Two major inositol transporters and their role in cryptococcal virulence.</title>
        <authorList>
            <person name="Wang Y."/>
            <person name="Liu T.B."/>
            <person name="Delmas G."/>
            <person name="Park S."/>
            <person name="Perlin D."/>
            <person name="Xue C."/>
        </authorList>
    </citation>
    <scope>FUNCTION</scope>
    <scope>CATALYTIC ACTIVITY</scope>
    <scope>SUBCELLULAR LOCATION</scope>
    <scope>INDUCTION</scope>
    <scope>DISRUPTION PHENOTYPE</scope>
</reference>
<reference evidence="8" key="4">
    <citation type="journal article" date="2013" name="PLoS Pathog.">
        <title>Brain inositol is a novel stimulator for promoting Cryptococcus penetration of the blood-brain barrier.</title>
        <authorList>
            <person name="Liu T.B."/>
            <person name="Kim J.C."/>
            <person name="Wang Y."/>
            <person name="Toffaletti D.L."/>
            <person name="Eugenin E."/>
            <person name="Perfect J.R."/>
            <person name="Kim K.J."/>
            <person name="Xue C."/>
        </authorList>
    </citation>
    <scope>FUNCTION</scope>
    <scope>DISRUPTION PHENOTYPE</scope>
</reference>
<reference evidence="8" key="5">
    <citation type="journal article" date="2014" name="Cell Commun. Signal.">
        <title>Cryptococcus inositol utilization modulates the host protective immune response during brain infection.</title>
        <authorList>
            <person name="Liu T.B."/>
            <person name="Subbian S."/>
            <person name="Pan W."/>
            <person name="Eugenin E."/>
            <person name="Xie J."/>
            <person name="Xue C."/>
        </authorList>
    </citation>
    <scope>DISRUPTION PHENOTYPE</scope>
</reference>
<proteinExistence type="evidence at protein level"/>
<comment type="function">
    <text evidence="3 4 5">Major transporter for myo-inositol (PubMed:20689743, PubMed:21398509). Plays a role in the traversal of the host blood-brain barrier (PubMed:23592982).</text>
</comment>
<comment type="catalytic activity">
    <reaction evidence="9 10">
        <text>myo-inositol(out) + H(+)(out) = myo-inositol(in) + H(+)(in)</text>
        <dbReference type="Rhea" id="RHEA:60364"/>
        <dbReference type="ChEBI" id="CHEBI:15378"/>
        <dbReference type="ChEBI" id="CHEBI:17268"/>
    </reaction>
</comment>
<comment type="subcellular location">
    <subcellularLocation>
        <location evidence="10">Cell membrane</location>
        <topology evidence="1">Multi-pass membrane protein</topology>
    </subcellularLocation>
</comment>
<comment type="induction">
    <text evidence="3 4">Induced during sexual reproduction (PubMed:20689743). Expressed during infection (PubMed:21398509).</text>
</comment>
<comment type="disruption phenotype">
    <text evidence="4 5 6">Simultaneous disruption of ITR1A results in defective mating hyphae, reduces production of phosphatidylinositol and glucuronoxylomannan, reduces laccase activity, and increases expression of ITR1, ITR2, ITR3, ITR3A, ITR3B, ITR5 and ITR6 (PubMed:21398509, PubMed:23592982, PubMed:25201772). Simultaneous disruption of ITR1A impairs the ability of the fungi to traverse the blood-brain barrier and leads to attenuated virulence in a murine inhalation model of systemic infection, and the brain infection models by tail vein or intracerebral injection (PubMed:21398509, PubMed:23592982, PubMed:25201772).</text>
</comment>
<comment type="similarity">
    <text evidence="2">Belongs to the major facilitator superfamily. Sugar transporter (TC 2.A.1.1) family.</text>
</comment>
<gene>
    <name evidence="7" type="primary">ITR3C</name>
    <name evidence="11" type="ORF">CNAG_05381</name>
</gene>
<evidence type="ECO:0000255" key="1"/>
<evidence type="ECO:0000255" key="2">
    <source>
        <dbReference type="RuleBase" id="RU003346"/>
    </source>
</evidence>
<evidence type="ECO:0000269" key="3">
    <source>
    </source>
</evidence>
<evidence type="ECO:0000269" key="4">
    <source>
    </source>
</evidence>
<evidence type="ECO:0000269" key="5">
    <source>
    </source>
</evidence>
<evidence type="ECO:0000269" key="6">
    <source>
    </source>
</evidence>
<evidence type="ECO:0000303" key="7">
    <source>
    </source>
</evidence>
<evidence type="ECO:0000305" key="8"/>
<evidence type="ECO:0000305" key="9">
    <source>
    </source>
</evidence>
<evidence type="ECO:0000305" key="10">
    <source>
    </source>
</evidence>
<evidence type="ECO:0000312" key="11">
    <source>
        <dbReference type="EMBL" id="AFR98808.1"/>
    </source>
</evidence>
<evidence type="ECO:0000312" key="12">
    <source>
        <dbReference type="Proteomes" id="UP000010091"/>
    </source>
</evidence>
<name>ITR3C_CRYNH</name>